<feature type="chain" id="PRO_0000071719" description="ATP synthase protein I">
    <location>
        <begin position="1"/>
        <end position="129"/>
    </location>
</feature>
<feature type="transmembrane region" description="Helical" evidence="1">
    <location>
        <begin position="16"/>
        <end position="36"/>
    </location>
</feature>
<feature type="transmembrane region" description="Helical" evidence="1">
    <location>
        <begin position="44"/>
        <end position="64"/>
    </location>
</feature>
<feature type="transmembrane region" description="Helical" evidence="1">
    <location>
        <begin position="77"/>
        <end position="97"/>
    </location>
</feature>
<feature type="transmembrane region" description="Helical" evidence="1">
    <location>
        <begin position="105"/>
        <end position="125"/>
    </location>
</feature>
<organism>
    <name type="scientific">Vibrio alginolyticus</name>
    <dbReference type="NCBI Taxonomy" id="663"/>
    <lineage>
        <taxon>Bacteria</taxon>
        <taxon>Pseudomonadati</taxon>
        <taxon>Pseudomonadota</taxon>
        <taxon>Gammaproteobacteria</taxon>
        <taxon>Vibrionales</taxon>
        <taxon>Vibrionaceae</taxon>
        <taxon>Vibrio</taxon>
    </lineage>
</organism>
<proteinExistence type="inferred from homology"/>
<protein>
    <recommendedName>
        <fullName>ATP synthase protein I</fullName>
    </recommendedName>
</protein>
<dbReference type="EMBL" id="X16050">
    <property type="protein sequence ID" value="CAA34174.1"/>
    <property type="molecule type" value="Genomic_DNA"/>
</dbReference>
<dbReference type="PIR" id="S06075">
    <property type="entry name" value="S06075"/>
</dbReference>
<dbReference type="RefSeq" id="WP_005378921.1">
    <property type="nucleotide sequence ID" value="NZ_WAHT01000005.1"/>
</dbReference>
<dbReference type="STRING" id="663.BAU10_15115"/>
<dbReference type="eggNOG" id="COG3312">
    <property type="taxonomic scope" value="Bacteria"/>
</dbReference>
<dbReference type="OrthoDB" id="5702716at2"/>
<dbReference type="GO" id="GO:0005886">
    <property type="term" value="C:plasma membrane"/>
    <property type="evidence" value="ECO:0007669"/>
    <property type="project" value="UniProtKB-SubCell"/>
</dbReference>
<dbReference type="GO" id="GO:0045259">
    <property type="term" value="C:proton-transporting ATP synthase complex"/>
    <property type="evidence" value="ECO:0007669"/>
    <property type="project" value="UniProtKB-KW"/>
</dbReference>
<dbReference type="GO" id="GO:1902600">
    <property type="term" value="P:proton transmembrane transport"/>
    <property type="evidence" value="ECO:0007669"/>
    <property type="project" value="UniProtKB-KW"/>
</dbReference>
<dbReference type="InterPro" id="IPR005598">
    <property type="entry name" value="ATP_synth_I"/>
</dbReference>
<dbReference type="NCBIfam" id="NF004414">
    <property type="entry name" value="PRK05760.1"/>
    <property type="match status" value="1"/>
</dbReference>
<dbReference type="Pfam" id="PF03899">
    <property type="entry name" value="ATP-synt_I"/>
    <property type="match status" value="1"/>
</dbReference>
<comment type="function">
    <text>A possible function for this protein is to guide the assembly of the membrane sector of the ATPase enzyme complex.</text>
</comment>
<comment type="subcellular location">
    <subcellularLocation>
        <location evidence="2">Cell inner membrane</location>
        <topology evidence="2">Multi-pass membrane protein</topology>
    </subcellularLocation>
</comment>
<comment type="similarity">
    <text evidence="2">Belongs to the bacterial AtpI family.</text>
</comment>
<gene>
    <name type="primary">atpI</name>
    <name type="synonym">uncI</name>
</gene>
<accession>P12983</accession>
<name>ATPZ_VIBAL</name>
<sequence length="129" mass="13835">MVAALARPGRELARQLLMIQSGAVIFVAAGMAVAINPDWGFSALIGGGIFVVANAVFALCAFMFSGARAAKRIAASFYTGEVLKILITVALFYVAYMYMQVELVPLKLTYLLVLGINICAPVLFINNKK</sequence>
<evidence type="ECO:0000255" key="1"/>
<evidence type="ECO:0000305" key="2"/>
<keyword id="KW-0997">Cell inner membrane</keyword>
<keyword id="KW-1003">Cell membrane</keyword>
<keyword id="KW-0138">CF(0)</keyword>
<keyword id="KW-0375">Hydrogen ion transport</keyword>
<keyword id="KW-0406">Ion transport</keyword>
<keyword id="KW-0472">Membrane</keyword>
<keyword id="KW-0812">Transmembrane</keyword>
<keyword id="KW-1133">Transmembrane helix</keyword>
<keyword id="KW-0813">Transport</keyword>
<reference key="1">
    <citation type="journal article" date="1989" name="Nucleic Acids Res.">
        <title>Nucleotide sequence of the unc operon of Vibrio alginolyticus.</title>
        <authorList>
            <person name="Krumholz L.R."/>
            <person name="Esser U."/>
            <person name="Simoni R.D."/>
        </authorList>
    </citation>
    <scope>NUCLEOTIDE SEQUENCE [GENOMIC DNA]</scope>
    <source>
        <strain>138-2</strain>
    </source>
</reference>